<protein>
    <recommendedName>
        <fullName>Uncharacterized protein C691.05c</fullName>
    </recommendedName>
</protein>
<dbReference type="EMBL" id="AB004535">
    <property type="protein sequence ID" value="BAA21409.1"/>
    <property type="molecule type" value="Genomic_DNA"/>
</dbReference>
<dbReference type="EMBL" id="CU329671">
    <property type="protein sequence ID" value="CAC37366.2"/>
    <property type="molecule type" value="Genomic_DNA"/>
</dbReference>
<dbReference type="RefSeq" id="XP_001713130.1">
    <property type="nucleotide sequence ID" value="XM_001713078.2"/>
</dbReference>
<dbReference type="SMR" id="O13621"/>
<dbReference type="BioGRID" id="277682">
    <property type="interactions" value="6"/>
</dbReference>
<dbReference type="FunCoup" id="O13621">
    <property type="interactions" value="81"/>
</dbReference>
<dbReference type="STRING" id="284812.O13621"/>
<dbReference type="iPTMnet" id="O13621"/>
<dbReference type="PaxDb" id="4896-SPBC691.05c.1"/>
<dbReference type="EnsemblFungi" id="SPBC691.05c.1">
    <property type="protein sequence ID" value="SPBC691.05c.1:pep"/>
    <property type="gene ID" value="SPBC691.05c"/>
</dbReference>
<dbReference type="PomBase" id="SPBC691.05c"/>
<dbReference type="VEuPathDB" id="FungiDB:SPBC691.05c"/>
<dbReference type="eggNOG" id="KOG2513">
    <property type="taxonomic scope" value="Eukaryota"/>
</dbReference>
<dbReference type="HOGENOM" id="CLU_010867_1_0_1"/>
<dbReference type="InParanoid" id="O13621"/>
<dbReference type="OMA" id="YNGPLKT"/>
<dbReference type="PhylomeDB" id="O13621"/>
<dbReference type="Reactome" id="R-SPO-2672351">
    <property type="pathway name" value="Stimuli-sensing channels"/>
</dbReference>
<dbReference type="Reactome" id="R-SPO-6798695">
    <property type="pathway name" value="Neutrophil degranulation"/>
</dbReference>
<dbReference type="PRO" id="PR:O13621"/>
<dbReference type="Proteomes" id="UP000002485">
    <property type="component" value="Chromosome II"/>
</dbReference>
<dbReference type="GO" id="GO:0032541">
    <property type="term" value="C:cortical endoplasmic reticulum"/>
    <property type="evidence" value="ECO:0000314"/>
    <property type="project" value="PomBase"/>
</dbReference>
<dbReference type="GO" id="GO:0005783">
    <property type="term" value="C:endoplasmic reticulum"/>
    <property type="evidence" value="ECO:0007005"/>
    <property type="project" value="PomBase"/>
</dbReference>
<dbReference type="GO" id="GO:0140268">
    <property type="term" value="C:endoplasmic reticulum-plasma membrane contact site"/>
    <property type="evidence" value="ECO:0000314"/>
    <property type="project" value="PomBase"/>
</dbReference>
<dbReference type="GO" id="GO:0016020">
    <property type="term" value="C:membrane"/>
    <property type="evidence" value="ECO:0007669"/>
    <property type="project" value="UniProtKB-SubCell"/>
</dbReference>
<dbReference type="GO" id="GO:0005254">
    <property type="term" value="F:chloride channel activity"/>
    <property type="evidence" value="ECO:0000318"/>
    <property type="project" value="GO_Central"/>
</dbReference>
<dbReference type="GO" id="GO:1902476">
    <property type="term" value="P:chloride transmembrane transport"/>
    <property type="evidence" value="ECO:0000318"/>
    <property type="project" value="GO_Central"/>
</dbReference>
<dbReference type="GO" id="GO:0061817">
    <property type="term" value="P:endoplasmic reticulum-plasma membrane tethering"/>
    <property type="evidence" value="ECO:0000266"/>
    <property type="project" value="PomBase"/>
</dbReference>
<dbReference type="InterPro" id="IPR007632">
    <property type="entry name" value="Anoctamin"/>
</dbReference>
<dbReference type="InterPro" id="IPR049456">
    <property type="entry name" value="Anoctamin_N_fung"/>
</dbReference>
<dbReference type="InterPro" id="IPR049452">
    <property type="entry name" value="Anoctamin_TM"/>
</dbReference>
<dbReference type="PANTHER" id="PTHR12308">
    <property type="entry name" value="ANOCTAMIN"/>
    <property type="match status" value="1"/>
</dbReference>
<dbReference type="PANTHER" id="PTHR12308:SF73">
    <property type="entry name" value="ANOCTAMIN"/>
    <property type="match status" value="1"/>
</dbReference>
<dbReference type="Pfam" id="PF04547">
    <property type="entry name" value="Anoctamin"/>
    <property type="match status" value="1"/>
</dbReference>
<dbReference type="Pfam" id="PF20877">
    <property type="entry name" value="Anoctamin_N"/>
    <property type="match status" value="1"/>
</dbReference>
<sequence length="668" mass="76671">MNEKLQSYEKQLTSDIVNNCDLIIEVNASSKTCQETLSSLLRELQLSHFSTAVRPGSDTSIFVFVKVQNDYLIELAHNDRTSSFLCGALDDLNHVNVNSVTDIDSSERIRLVYDKITGSKTEDSLGICPGENPYADIISIFPLHQPKFDIKWSKYWYQLLLGNKKQLDSINAEYGSQVALYFAFADFFKTGVFVLSFWGILGYYFLRPYSYIFAIGVALWGAFFIQFWRVQEHKLTNHWSTVNCQSLAKSMTEFKPQSYRVDSLLGTARPYYPQWEIIVRSTIANVPLFLISGCILLFLIAIAFIVDVTLSEVYSGPLKSIVSLLPAVVFQVLTLPFTFIYSIVAERLTKLENRRTKTDFQASLSGKMFLQNFMLSYTALFLISYIYGPFAEYFVPHYIQNRMSQSFFSVGYIAKSTFKLNPLRLRNQYIYFLTNAQVINYITILAVPQLISYVKKHYMSKPTRELHIQDIPSETVTLKRARSEAEKIEYDCYNDYKDFVLMFGFLVMFSPIYPLAPIFSLVNCVLYIRSSVYRFTKMVKKPVPCRVDSIAPWDQRLSLLSWLGCITMPSICYFYSSTTKPSDKSMVIAAVIGLLSEHLWFLLRMFISSVFPVDKTFFAPAKERQHLLAERSFSIPPVADVPTSTTTAFEEADETLSIYRTAENKKTK</sequence>
<keyword id="KW-0472">Membrane</keyword>
<keyword id="KW-1185">Reference proteome</keyword>
<keyword id="KW-0812">Transmembrane</keyword>
<keyword id="KW-1133">Transmembrane helix</keyword>
<proteinExistence type="predicted"/>
<organism>
    <name type="scientific">Schizosaccharomyces pombe (strain 972 / ATCC 24843)</name>
    <name type="common">Fission yeast</name>
    <dbReference type="NCBI Taxonomy" id="284812"/>
    <lineage>
        <taxon>Eukaryota</taxon>
        <taxon>Fungi</taxon>
        <taxon>Dikarya</taxon>
        <taxon>Ascomycota</taxon>
        <taxon>Taphrinomycotina</taxon>
        <taxon>Schizosaccharomycetes</taxon>
        <taxon>Schizosaccharomycetales</taxon>
        <taxon>Schizosaccharomycetaceae</taxon>
        <taxon>Schizosaccharomyces</taxon>
    </lineage>
</organism>
<comment type="subcellular location">
    <subcellularLocation>
        <location evidence="2">Membrane</location>
        <topology evidence="2">Multi-pass membrane protein</topology>
    </subcellularLocation>
</comment>
<gene>
    <name type="ORF">pi030</name>
    <name type="ORF">SPBC691.05c</name>
    <name type="ORF">SPBP22H7.01c</name>
</gene>
<feature type="chain" id="PRO_0000116853" description="Uncharacterized protein C691.05c">
    <location>
        <begin position="1"/>
        <end position="668"/>
    </location>
</feature>
<feature type="transmembrane region" description="Helical" evidence="1">
    <location>
        <begin position="182"/>
        <end position="202"/>
    </location>
</feature>
<feature type="transmembrane region" description="Helical" evidence="1">
    <location>
        <begin position="208"/>
        <end position="228"/>
    </location>
</feature>
<feature type="transmembrane region" description="Helical" evidence="1">
    <location>
        <begin position="286"/>
        <end position="306"/>
    </location>
</feature>
<feature type="transmembrane region" description="Helical" evidence="1">
    <location>
        <begin position="321"/>
        <end position="341"/>
    </location>
</feature>
<feature type="transmembrane region" description="Helical" evidence="1">
    <location>
        <begin position="379"/>
        <end position="399"/>
    </location>
</feature>
<feature type="transmembrane region" description="Helical" evidence="1">
    <location>
        <begin position="430"/>
        <end position="450"/>
    </location>
</feature>
<feature type="transmembrane region" description="Helical" evidence="1">
    <location>
        <begin position="499"/>
        <end position="519"/>
    </location>
</feature>
<feature type="transmembrane region" description="Helical" evidence="1">
    <location>
        <begin position="557"/>
        <end position="577"/>
    </location>
</feature>
<feature type="transmembrane region" description="Helical" evidence="1">
    <location>
        <begin position="587"/>
        <end position="607"/>
    </location>
</feature>
<evidence type="ECO:0000255" key="1"/>
<evidence type="ECO:0000305" key="2"/>
<reference key="1">
    <citation type="journal article" date="2000" name="Yeast">
        <title>A 38 kb segment containing the cdc2 gene from the left arm of fission yeast chromosome II: sequence analysis and characterization of the genomic DNA and cDNAs encoded on the segment.</title>
        <authorList>
            <person name="Machida M."/>
            <person name="Yamazaki S."/>
            <person name="Kunihiro S."/>
            <person name="Tanaka T."/>
            <person name="Kushida N."/>
            <person name="Jinno K."/>
            <person name="Haikawa Y."/>
            <person name="Yamazaki J."/>
            <person name="Yamamoto S."/>
            <person name="Sekine M."/>
            <person name="Oguchi A."/>
            <person name="Nagai Y."/>
            <person name="Sakai M."/>
            <person name="Aoki K."/>
            <person name="Ogura K."/>
            <person name="Kudoh Y."/>
            <person name="Kikuchi H."/>
            <person name="Zhang M.Q."/>
            <person name="Yanagida M."/>
        </authorList>
    </citation>
    <scope>NUCLEOTIDE SEQUENCE [LARGE SCALE GENOMIC DNA]</scope>
    <source>
        <strain>972 / ATCC 24843</strain>
    </source>
</reference>
<reference key="2">
    <citation type="journal article" date="2002" name="Nature">
        <title>The genome sequence of Schizosaccharomyces pombe.</title>
        <authorList>
            <person name="Wood V."/>
            <person name="Gwilliam R."/>
            <person name="Rajandream M.A."/>
            <person name="Lyne M.H."/>
            <person name="Lyne R."/>
            <person name="Stewart A."/>
            <person name="Sgouros J.G."/>
            <person name="Peat N."/>
            <person name="Hayles J."/>
            <person name="Baker S.G."/>
            <person name="Basham D."/>
            <person name="Bowman S."/>
            <person name="Brooks K."/>
            <person name="Brown D."/>
            <person name="Brown S."/>
            <person name="Chillingworth T."/>
            <person name="Churcher C.M."/>
            <person name="Collins M."/>
            <person name="Connor R."/>
            <person name="Cronin A."/>
            <person name="Davis P."/>
            <person name="Feltwell T."/>
            <person name="Fraser A."/>
            <person name="Gentles S."/>
            <person name="Goble A."/>
            <person name="Hamlin N."/>
            <person name="Harris D.E."/>
            <person name="Hidalgo J."/>
            <person name="Hodgson G."/>
            <person name="Holroyd S."/>
            <person name="Hornsby T."/>
            <person name="Howarth S."/>
            <person name="Huckle E.J."/>
            <person name="Hunt S."/>
            <person name="Jagels K."/>
            <person name="James K.D."/>
            <person name="Jones L."/>
            <person name="Jones M."/>
            <person name="Leather S."/>
            <person name="McDonald S."/>
            <person name="McLean J."/>
            <person name="Mooney P."/>
            <person name="Moule S."/>
            <person name="Mungall K.L."/>
            <person name="Murphy L.D."/>
            <person name="Niblett D."/>
            <person name="Odell C."/>
            <person name="Oliver K."/>
            <person name="O'Neil S."/>
            <person name="Pearson D."/>
            <person name="Quail M.A."/>
            <person name="Rabbinowitsch E."/>
            <person name="Rutherford K.M."/>
            <person name="Rutter S."/>
            <person name="Saunders D."/>
            <person name="Seeger K."/>
            <person name="Sharp S."/>
            <person name="Skelton J."/>
            <person name="Simmonds M.N."/>
            <person name="Squares R."/>
            <person name="Squares S."/>
            <person name="Stevens K."/>
            <person name="Taylor K."/>
            <person name="Taylor R.G."/>
            <person name="Tivey A."/>
            <person name="Walsh S.V."/>
            <person name="Warren T."/>
            <person name="Whitehead S."/>
            <person name="Woodward J.R."/>
            <person name="Volckaert G."/>
            <person name="Aert R."/>
            <person name="Robben J."/>
            <person name="Grymonprez B."/>
            <person name="Weltjens I."/>
            <person name="Vanstreels E."/>
            <person name="Rieger M."/>
            <person name="Schaefer M."/>
            <person name="Mueller-Auer S."/>
            <person name="Gabel C."/>
            <person name="Fuchs M."/>
            <person name="Duesterhoeft A."/>
            <person name="Fritzc C."/>
            <person name="Holzer E."/>
            <person name="Moestl D."/>
            <person name="Hilbert H."/>
            <person name="Borzym K."/>
            <person name="Langer I."/>
            <person name="Beck A."/>
            <person name="Lehrach H."/>
            <person name="Reinhardt R."/>
            <person name="Pohl T.M."/>
            <person name="Eger P."/>
            <person name="Zimmermann W."/>
            <person name="Wedler H."/>
            <person name="Wambutt R."/>
            <person name="Purnelle B."/>
            <person name="Goffeau A."/>
            <person name="Cadieu E."/>
            <person name="Dreano S."/>
            <person name="Gloux S."/>
            <person name="Lelaure V."/>
            <person name="Mottier S."/>
            <person name="Galibert F."/>
            <person name="Aves S.J."/>
            <person name="Xiang Z."/>
            <person name="Hunt C."/>
            <person name="Moore K."/>
            <person name="Hurst S.M."/>
            <person name="Lucas M."/>
            <person name="Rochet M."/>
            <person name="Gaillardin C."/>
            <person name="Tallada V.A."/>
            <person name="Garzon A."/>
            <person name="Thode G."/>
            <person name="Daga R.R."/>
            <person name="Cruzado L."/>
            <person name="Jimenez J."/>
            <person name="Sanchez M."/>
            <person name="del Rey F."/>
            <person name="Benito J."/>
            <person name="Dominguez A."/>
            <person name="Revuelta J.L."/>
            <person name="Moreno S."/>
            <person name="Armstrong J."/>
            <person name="Forsburg S.L."/>
            <person name="Cerutti L."/>
            <person name="Lowe T."/>
            <person name="McCombie W.R."/>
            <person name="Paulsen I."/>
            <person name="Potashkin J."/>
            <person name="Shpakovski G.V."/>
            <person name="Ussery D."/>
            <person name="Barrell B.G."/>
            <person name="Nurse P."/>
        </authorList>
    </citation>
    <scope>NUCLEOTIDE SEQUENCE [LARGE SCALE GENOMIC DNA]</scope>
    <source>
        <strain>972 / ATCC 24843</strain>
    </source>
</reference>
<accession>O13621</accession>
<accession>Q9C0W6</accession>
<name>YNG5_SCHPO</name>